<organismHost>
    <name type="scientific">Shigella flexneri</name>
    <dbReference type="NCBI Taxonomy" id="623"/>
</organismHost>
<protein>
    <recommendedName>
        <fullName>Probable excisionase hkaC</fullName>
    </recommendedName>
</protein>
<comment type="function">
    <text evidence="1">Excisionase and integrase are necessary for the excision of prophage from the host genome by site-specific recombination at the att site.</text>
</comment>
<comment type="similarity">
    <text evidence="2">Belongs to the phage alpA excisionase family.</text>
</comment>
<reference key="1">
    <citation type="journal article" date="2004" name="J. Mol. Biol.">
        <title>The chromosome of Shigella flexneri bacteriophage Sf6: complete nucleotide sequence, genetic mosaicism, and DNA packaging.</title>
        <authorList>
            <person name="Casjens S."/>
            <person name="Winn-Stapley D.A."/>
            <person name="Gilcrease E.B."/>
            <person name="Morona R."/>
            <person name="Kuehlewein C."/>
            <person name="Chua J.E.H."/>
            <person name="Manning P.A."/>
            <person name="Inwood W."/>
            <person name="Clark A.J."/>
        </authorList>
    </citation>
    <scope>NUCLEOTIDE SEQUENCE [LARGE SCALE GENOMIC DNA]</scope>
</reference>
<keyword id="KW-0233">DNA recombination</keyword>
<keyword id="KW-0238">DNA-binding</keyword>
<keyword id="KW-1185">Reference proteome</keyword>
<keyword id="KW-1250">Viral genome excision</keyword>
<organism>
    <name type="scientific">Shigella phage Sf6</name>
    <name type="common">Shigella flexneri bacteriophage VI</name>
    <name type="synonym">Bacteriophage SfVI</name>
    <dbReference type="NCBI Taxonomy" id="10761"/>
    <lineage>
        <taxon>Viruses</taxon>
        <taxon>Duplodnaviria</taxon>
        <taxon>Heunggongvirae</taxon>
        <taxon>Uroviricota</taxon>
        <taxon>Caudoviricetes</taxon>
        <taxon>Lederbergvirus</taxon>
    </lineage>
</organism>
<proteinExistence type="inferred from homology"/>
<sequence>MQHELQPDSLVDLKFIMADTGFGKTFIYDRIKSGDLPKAKVIHGRARWLYRDHCEFKNKLLSRANG</sequence>
<evidence type="ECO:0000250" key="1"/>
<evidence type="ECO:0000305" key="2"/>
<name>VXIS_BPSFV</name>
<feature type="chain" id="PRO_0000252165" description="Probable excisionase hkaC">
    <location>
        <begin position="1"/>
        <end position="66"/>
    </location>
</feature>
<dbReference type="EMBL" id="AF547987">
    <property type="protein sequence ID" value="AAQ12208.1"/>
    <property type="molecule type" value="Genomic_DNA"/>
</dbReference>
<dbReference type="RefSeq" id="NP_958194.1">
    <property type="nucleotide sequence ID" value="NC_005344.1"/>
</dbReference>
<dbReference type="BMRB" id="Q716F7"/>
<dbReference type="SMR" id="Q716F7"/>
<dbReference type="KEGG" id="vg:2716661"/>
<dbReference type="OrthoDB" id="22010at10239"/>
<dbReference type="Proteomes" id="UP000000846">
    <property type="component" value="Segment"/>
</dbReference>
<dbReference type="GO" id="GO:0003677">
    <property type="term" value="F:DNA binding"/>
    <property type="evidence" value="ECO:0007669"/>
    <property type="project" value="UniProtKB-KW"/>
</dbReference>
<dbReference type="GO" id="GO:0006310">
    <property type="term" value="P:DNA recombination"/>
    <property type="evidence" value="ECO:0007669"/>
    <property type="project" value="UniProtKB-KW"/>
</dbReference>
<dbReference type="GO" id="GO:0032359">
    <property type="term" value="P:provirus excision"/>
    <property type="evidence" value="ECO:0007669"/>
    <property type="project" value="UniProtKB-KW"/>
</dbReference>
<dbReference type="Gene3D" id="1.10.238.160">
    <property type="match status" value="1"/>
</dbReference>
<gene>
    <name type="primary">18</name>
</gene>
<accession>Q716F7</accession>